<accession>P26652</accession>
<evidence type="ECO:0000250" key="1">
    <source>
        <dbReference type="UniProtKB" id="P16035"/>
    </source>
</evidence>
<evidence type="ECO:0000255" key="2">
    <source>
        <dbReference type="PROSITE-ProRule" id="PRU00295"/>
    </source>
</evidence>
<evidence type="ECO:0000269" key="3">
    <source>
    </source>
</evidence>
<evidence type="ECO:0000305" key="4"/>
<feature type="signal peptide" evidence="3">
    <location>
        <begin position="1"/>
        <end position="24"/>
    </location>
</feature>
<feature type="chain" id="PRO_0000034346" description="Metalloproteinase inhibitor 3">
    <location>
        <begin position="25"/>
        <end position="212"/>
    </location>
</feature>
<feature type="domain" description="NTR" evidence="2">
    <location>
        <begin position="25"/>
        <end position="144"/>
    </location>
</feature>
<feature type="region of interest" description="Involved in metalloproteinase-binding" evidence="1">
    <location>
        <begin position="25"/>
        <end position="28"/>
    </location>
</feature>
<feature type="region of interest" description="Involved in metalloproteinase-binding" evidence="1">
    <location>
        <begin position="89"/>
        <end position="90"/>
    </location>
</feature>
<feature type="binding site" evidence="1">
    <location>
        <position position="25"/>
    </location>
    <ligand>
        <name>Zn(2+)</name>
        <dbReference type="ChEBI" id="CHEBI:29105"/>
        <note>ligand shared with metalloproteinase partner</note>
    </ligand>
</feature>
<feature type="site" description="Involved in metalloproteinase-binding" evidence="1">
    <location>
        <position position="38"/>
    </location>
</feature>
<feature type="disulfide bond" evidence="2">
    <location>
        <begin position="25"/>
        <end position="92"/>
    </location>
</feature>
<feature type="disulfide bond" evidence="2">
    <location>
        <begin position="27"/>
        <end position="119"/>
    </location>
</feature>
<feature type="disulfide bond" evidence="2">
    <location>
        <begin position="37"/>
        <end position="144"/>
    </location>
</feature>
<feature type="disulfide bond" evidence="2">
    <location>
        <begin position="146"/>
        <end position="193"/>
    </location>
</feature>
<feature type="disulfide bond" evidence="2">
    <location>
        <begin position="151"/>
        <end position="156"/>
    </location>
</feature>
<feature type="disulfide bond" evidence="2">
    <location>
        <begin position="164"/>
        <end position="185"/>
    </location>
</feature>
<comment type="function">
    <text>Complexes with metalloproteinases (such as collagenases) and irreversibly inactivates them by binding to their catalytic zinc cofactor. May form part of a tissue-specific acute response to remodeling stimuli.</text>
</comment>
<comment type="subcellular location">
    <subcellularLocation>
        <location>Secreted</location>
        <location>Extracellular space</location>
        <location>Extracellular matrix</location>
    </subcellularLocation>
</comment>
<comment type="similarity">
    <text evidence="4">Belongs to the protease inhibitor I35 (TIMP) family.</text>
</comment>
<keyword id="KW-0903">Direct protein sequencing</keyword>
<keyword id="KW-1015">Disulfide bond</keyword>
<keyword id="KW-0272">Extracellular matrix</keyword>
<keyword id="KW-0479">Metal-binding</keyword>
<keyword id="KW-0481">Metalloenzyme inhibitor</keyword>
<keyword id="KW-0483">Metalloprotease inhibitor</keyword>
<keyword id="KW-0646">Protease inhibitor</keyword>
<keyword id="KW-1185">Reference proteome</keyword>
<keyword id="KW-0964">Secreted</keyword>
<keyword id="KW-0732">Signal</keyword>
<keyword id="KW-0862">Zinc</keyword>
<sequence>MTAWLGFLAVFLCSWSLRDLVAEACTCVPIHPQDAFCNSDIVIRAKVVGKKLMKDGPFGTMRYTVKQMKMYRGFQIMPHVQYIYTEASESLCGVKLEVNKYQYLITGRVYEGKVYTGLCNWYEKWDRLTLSQRKGLNHRYHLGCGCKIRPCYYLPCFATSKNECIWTDMLSNFGHSGHQAKHYACIQRVEGYCSWYRGWAPPDKTIINATDP</sequence>
<name>TIMP3_CHICK</name>
<gene>
    <name type="primary">TIMP3</name>
    <name type="synonym">IMP-3</name>
</gene>
<dbReference type="EMBL" id="M94531">
    <property type="protein sequence ID" value="AAA48813.1"/>
    <property type="molecule type" value="mRNA"/>
</dbReference>
<dbReference type="PIR" id="A43429">
    <property type="entry name" value="A43429"/>
</dbReference>
<dbReference type="RefSeq" id="NP_990818.1">
    <property type="nucleotide sequence ID" value="NM_205487.3"/>
</dbReference>
<dbReference type="SMR" id="P26652"/>
<dbReference type="FunCoup" id="P26652">
    <property type="interactions" value="475"/>
</dbReference>
<dbReference type="STRING" id="9031.ENSGALP00000040866"/>
<dbReference type="MEROPS" id="I35.003"/>
<dbReference type="PaxDb" id="9031-ENSGALP00000020494"/>
<dbReference type="Ensembl" id="ENSGALT00010037000.1">
    <property type="protein sequence ID" value="ENSGALP00010021525.1"/>
    <property type="gene ID" value="ENSGALG00010015407.1"/>
</dbReference>
<dbReference type="GeneID" id="396483"/>
<dbReference type="KEGG" id="gga:396483"/>
<dbReference type="CTD" id="7078"/>
<dbReference type="VEuPathDB" id="HostDB:geneid_396483"/>
<dbReference type="eggNOG" id="KOG4745">
    <property type="taxonomic scope" value="Eukaryota"/>
</dbReference>
<dbReference type="GeneTree" id="ENSGT00940000159601"/>
<dbReference type="HOGENOM" id="CLU_084029_0_0_1"/>
<dbReference type="InParanoid" id="P26652"/>
<dbReference type="OMA" id="PFGKCET"/>
<dbReference type="OrthoDB" id="6041373at2759"/>
<dbReference type="PhylomeDB" id="P26652"/>
<dbReference type="TreeFam" id="TF317409"/>
<dbReference type="Reactome" id="R-GGA-114608">
    <property type="pathway name" value="Platelet degranulation"/>
</dbReference>
<dbReference type="PRO" id="PR:P26652"/>
<dbReference type="Proteomes" id="UP000000539">
    <property type="component" value="Chromosome 1"/>
</dbReference>
<dbReference type="Bgee" id="ENSGALG00000028627">
    <property type="expression patterns" value="Expressed in lung and 13 other cell types or tissues"/>
</dbReference>
<dbReference type="GO" id="GO:0005604">
    <property type="term" value="C:basement membrane"/>
    <property type="evidence" value="ECO:0007669"/>
    <property type="project" value="Ensembl"/>
</dbReference>
<dbReference type="GO" id="GO:0031012">
    <property type="term" value="C:extracellular matrix"/>
    <property type="evidence" value="ECO:0000318"/>
    <property type="project" value="GO_Central"/>
</dbReference>
<dbReference type="GO" id="GO:0005615">
    <property type="term" value="C:extracellular space"/>
    <property type="evidence" value="ECO:0000318"/>
    <property type="project" value="GO_Central"/>
</dbReference>
<dbReference type="GO" id="GO:0008191">
    <property type="term" value="F:metalloendopeptidase inhibitor activity"/>
    <property type="evidence" value="ECO:0000318"/>
    <property type="project" value="GO_Central"/>
</dbReference>
<dbReference type="GO" id="GO:0008270">
    <property type="term" value="F:zinc ion binding"/>
    <property type="evidence" value="ECO:0000250"/>
    <property type="project" value="UniProtKB"/>
</dbReference>
<dbReference type="GO" id="GO:0051045">
    <property type="term" value="P:negative regulation of membrane protein ectodomain proteolysis"/>
    <property type="evidence" value="ECO:0000318"/>
    <property type="project" value="GO_Central"/>
</dbReference>
<dbReference type="GO" id="GO:0034097">
    <property type="term" value="P:response to cytokine"/>
    <property type="evidence" value="ECO:0000318"/>
    <property type="project" value="GO_Central"/>
</dbReference>
<dbReference type="GO" id="GO:0009725">
    <property type="term" value="P:response to hormone"/>
    <property type="evidence" value="ECO:0000318"/>
    <property type="project" value="GO_Central"/>
</dbReference>
<dbReference type="CDD" id="cd03585">
    <property type="entry name" value="NTR_TIMP"/>
    <property type="match status" value="1"/>
</dbReference>
<dbReference type="FunFam" id="3.90.370.10:FF:000001">
    <property type="entry name" value="Metalloproteinase inhibitor 3"/>
    <property type="match status" value="1"/>
</dbReference>
<dbReference type="FunFam" id="2.40.50.120:FF:000005">
    <property type="entry name" value="Metalloproteinase inhibitor 3 precursor"/>
    <property type="match status" value="1"/>
</dbReference>
<dbReference type="Gene3D" id="2.40.50.120">
    <property type="match status" value="1"/>
</dbReference>
<dbReference type="Gene3D" id="3.90.370.10">
    <property type="entry name" value="Tissue inhibitor of metalloproteinase-1. Chain B, domain 1"/>
    <property type="match status" value="1"/>
</dbReference>
<dbReference type="InterPro" id="IPR001134">
    <property type="entry name" value="Netrin_domain"/>
</dbReference>
<dbReference type="InterPro" id="IPR001820">
    <property type="entry name" value="TIMP"/>
</dbReference>
<dbReference type="InterPro" id="IPR008993">
    <property type="entry name" value="TIMP-like_OB-fold"/>
</dbReference>
<dbReference type="InterPro" id="IPR027465">
    <property type="entry name" value="TIMP_C"/>
</dbReference>
<dbReference type="InterPro" id="IPR030490">
    <property type="entry name" value="TIMP_CS"/>
</dbReference>
<dbReference type="PANTHER" id="PTHR11844">
    <property type="entry name" value="METALLOPROTEASE INHIBITOR"/>
    <property type="match status" value="1"/>
</dbReference>
<dbReference type="PANTHER" id="PTHR11844:SF22">
    <property type="entry name" value="METALLOPROTEINASE INHIBITOR 3"/>
    <property type="match status" value="1"/>
</dbReference>
<dbReference type="Pfam" id="PF00965">
    <property type="entry name" value="TIMP"/>
    <property type="match status" value="1"/>
</dbReference>
<dbReference type="SMART" id="SM00206">
    <property type="entry name" value="NTR"/>
    <property type="match status" value="1"/>
</dbReference>
<dbReference type="SUPFAM" id="SSF50242">
    <property type="entry name" value="TIMP-like"/>
    <property type="match status" value="1"/>
</dbReference>
<dbReference type="PROSITE" id="PS50189">
    <property type="entry name" value="NTR"/>
    <property type="match status" value="1"/>
</dbReference>
<dbReference type="PROSITE" id="PS00288">
    <property type="entry name" value="TIMP"/>
    <property type="match status" value="1"/>
</dbReference>
<organism>
    <name type="scientific">Gallus gallus</name>
    <name type="common">Chicken</name>
    <dbReference type="NCBI Taxonomy" id="9031"/>
    <lineage>
        <taxon>Eukaryota</taxon>
        <taxon>Metazoa</taxon>
        <taxon>Chordata</taxon>
        <taxon>Craniata</taxon>
        <taxon>Vertebrata</taxon>
        <taxon>Euteleostomi</taxon>
        <taxon>Archelosauria</taxon>
        <taxon>Archosauria</taxon>
        <taxon>Dinosauria</taxon>
        <taxon>Saurischia</taxon>
        <taxon>Theropoda</taxon>
        <taxon>Coelurosauria</taxon>
        <taxon>Aves</taxon>
        <taxon>Neognathae</taxon>
        <taxon>Galloanserae</taxon>
        <taxon>Galliformes</taxon>
        <taxon>Phasianidae</taxon>
        <taxon>Phasianinae</taxon>
        <taxon>Gallus</taxon>
    </lineage>
</organism>
<reference key="1">
    <citation type="journal article" date="1992" name="J. Biol. Chem.">
        <title>A new inhibitor of metalloproteinases from chicken: ChIMP-3. A third member of the TIMP family.</title>
        <authorList>
            <person name="Pavloff N."/>
            <person name="Staskus P.W."/>
            <person name="Kishanani N.S."/>
            <person name="Hawkes S.P."/>
        </authorList>
    </citation>
    <scope>NUCLEOTIDE SEQUENCE [MRNA]</scope>
    <source>
        <tissue>Embryonic fibroblast</tissue>
    </source>
</reference>
<reference key="2">
    <citation type="journal article" date="1991" name="J. Biol. Chem.">
        <title>The 21-kDa protein is a transformation-sensitive metalloproteinase inhibitor of chicken fibroblasts.</title>
        <authorList>
            <person name="Staskus P.W."/>
            <person name="Masiarz F.R."/>
            <person name="Pallanck L.J."/>
            <person name="Hawkes S.P."/>
        </authorList>
    </citation>
    <scope>PROTEIN SEQUENCE OF 25-53</scope>
    <source>
        <tissue>Fibroblast</tissue>
    </source>
</reference>
<proteinExistence type="evidence at protein level"/>
<protein>
    <recommendedName>
        <fullName>Metalloproteinase inhibitor 3</fullName>
    </recommendedName>
    <alternativeName>
        <fullName>21 kDa protein of extracellular matrix</fullName>
    </alternativeName>
    <alternativeName>
        <fullName>Tissue inhibitor of metalloproteinases 3</fullName>
        <shortName>TIMP-3</shortName>
    </alternativeName>
</protein>